<feature type="signal peptide" evidence="1">
    <location>
        <begin position="1"/>
        <end position="23"/>
    </location>
</feature>
<feature type="chain" id="PRO_0000033183" description="Sclerostin domain-containing protein 1">
    <location>
        <begin position="24"/>
        <end position="206"/>
    </location>
</feature>
<feature type="domain" description="CTCK" evidence="3">
    <location>
        <begin position="75"/>
        <end position="170"/>
    </location>
</feature>
<feature type="region of interest" description="Disordered" evidence="4">
    <location>
        <begin position="42"/>
        <end position="62"/>
    </location>
</feature>
<feature type="region of interest" description="Disordered" evidence="4">
    <location>
        <begin position="176"/>
        <end position="206"/>
    </location>
</feature>
<feature type="compositionally biased region" description="Polar residues" evidence="4">
    <location>
        <begin position="43"/>
        <end position="62"/>
    </location>
</feature>
<feature type="compositionally biased region" description="Basic residues" evidence="4">
    <location>
        <begin position="188"/>
        <end position="206"/>
    </location>
</feature>
<feature type="glycosylation site" description="N-linked (GlcNAc...) asparagine" evidence="2">
    <location>
        <position position="47"/>
    </location>
</feature>
<feature type="glycosylation site" description="N-linked (GlcNAc...) asparagine" evidence="2">
    <location>
        <position position="173"/>
    </location>
</feature>
<feature type="disulfide bond" evidence="3">
    <location>
        <begin position="75"/>
        <end position="133"/>
    </location>
</feature>
<feature type="disulfide bond" evidence="3">
    <location>
        <begin position="89"/>
        <end position="147"/>
    </location>
</feature>
<feature type="disulfide bond" evidence="3">
    <location>
        <begin position="100"/>
        <end position="163"/>
    </location>
</feature>
<feature type="disulfide bond" evidence="3">
    <location>
        <begin position="104"/>
        <end position="165"/>
    </location>
</feature>
<feature type="sequence conflict" description="In Ref. 1; AAN45848." evidence="7" ref="1">
    <original>P</original>
    <variation>L</variation>
    <location>
        <position position="187"/>
    </location>
</feature>
<proteinExistence type="evidence at transcript level"/>
<name>SOSD1_RAT</name>
<comment type="function">
    <text evidence="1 5 6">Directly antagonizes activity of BMP2, BMP4, BMP6 and BMP7 in a dose-dependent manner (By similarity). May be involved in the onset of endometrial receptivity for implantation/sensitization for the decidual cell reaction. Enhances Wnt signaling and inhibits TGF-beta signaling.</text>
</comment>
<comment type="subunit">
    <text evidence="1">Interacts with BMP2, BMP4, BMP6 and BMP7 with high affinity.</text>
</comment>
<comment type="subcellular location">
    <subcellularLocation>
        <location evidence="6">Secreted</location>
    </subcellularLocation>
</comment>
<comment type="tissue specificity">
    <text evidence="5 6">Highly expressed within the maximally sensitized/receptive endometrium. Weakly expressed in brain, kidney and the female reproductive tract. Expressed in the dermal papilla (DP) and at high level in the precortex of both anagen vibrissae and pelage follicles. Dynymic expression during the hair cycle.</text>
</comment>
<comment type="developmental stage">
    <text evidence="6">Highly expressed in epidermis, dermis and the outermost periderm layer in the 17 day post-coitum (dpc).</text>
</comment>
<comment type="induction">
    <text evidence="5">Up-regulated at day 5 pregnant or pseudopregnant of the uterine glandular epithelial cells, at time of maximal sensitization for the decidual cell reaction. Down-regulated at day 6 refractory uterus.</text>
</comment>
<comment type="similarity">
    <text evidence="7">Belongs to the sclerostin family.</text>
</comment>
<reference key="1">
    <citation type="journal article" date="2002" name="Biol. Reprod.">
        <title>Uterine sensitization-associated gene-1: a novel gene induced within the rat endometrium at the time of uterine receptivity/sensitization for the decidual cell reaction.</title>
        <authorList>
            <person name="Simmons D.G."/>
            <person name="Kennedy T.G."/>
        </authorList>
    </citation>
    <scope>NUCLEOTIDE SEQUENCE [MRNA]</scope>
    <scope>FUNCTION</scope>
    <scope>TISSUE SPECIFICITY</scope>
    <scope>INDUCTION</scope>
    <source>
        <strain>Sprague-Dawley</strain>
        <tissue>Uterus</tissue>
    </source>
</reference>
<reference key="2">
    <citation type="journal article" date="2004" name="Genome Res.">
        <title>The status, quality, and expansion of the NIH full-length cDNA project: the Mammalian Gene Collection (MGC).</title>
        <authorList>
            <consortium name="The MGC Project Team"/>
        </authorList>
    </citation>
    <scope>NUCLEOTIDE SEQUENCE [LARGE SCALE MRNA]</scope>
    <source>
        <tissue>Heart</tissue>
    </source>
</reference>
<reference key="3">
    <citation type="journal article" date="2004" name="J. Invest. Dermatol.">
        <title>The WNT signalling modulator, Wise, is expressed in an interaction-dependent manner during hair-follicle cycling.</title>
        <authorList>
            <person name="O'Shaughnessy R.F.L."/>
            <person name="Yeo W."/>
            <person name="Gautier J."/>
            <person name="Jahoda C.A.B."/>
            <person name="Christiano A.M."/>
        </authorList>
    </citation>
    <scope>FUNCTION</scope>
    <scope>SUBCELLULAR LOCATION</scope>
    <scope>TISSUE SPECIFICITY</scope>
    <scope>DEVELOPMENTAL STAGE</scope>
</reference>
<dbReference type="EMBL" id="AF411056">
    <property type="protein sequence ID" value="AAN45848.1"/>
    <property type="molecule type" value="mRNA"/>
</dbReference>
<dbReference type="EMBL" id="BC081710">
    <property type="protein sequence ID" value="AAH81710.1"/>
    <property type="molecule type" value="mRNA"/>
</dbReference>
<dbReference type="RefSeq" id="NP_714959.2">
    <property type="nucleotide sequence ID" value="NM_153737.2"/>
</dbReference>
<dbReference type="SMR" id="Q642G2"/>
<dbReference type="FunCoup" id="Q642G2">
    <property type="interactions" value="9"/>
</dbReference>
<dbReference type="STRING" id="10116.ENSRNOP00000008106"/>
<dbReference type="GlyCosmos" id="Q642G2">
    <property type="glycosylation" value="2 sites, No reported glycans"/>
</dbReference>
<dbReference type="GlyGen" id="Q642G2">
    <property type="glycosylation" value="2 sites"/>
</dbReference>
<dbReference type="PhosphoSitePlus" id="Q642G2"/>
<dbReference type="PaxDb" id="10116-ENSRNOP00000008106"/>
<dbReference type="Ensembl" id="ENSRNOT00000008106.7">
    <property type="protein sequence ID" value="ENSRNOP00000008106.3"/>
    <property type="gene ID" value="ENSRNOG00000005770.7"/>
</dbReference>
<dbReference type="GeneID" id="266803"/>
<dbReference type="KEGG" id="rno:266803"/>
<dbReference type="UCSC" id="RGD:628877">
    <property type="organism name" value="rat"/>
</dbReference>
<dbReference type="AGR" id="RGD:628877"/>
<dbReference type="CTD" id="25928"/>
<dbReference type="RGD" id="628877">
    <property type="gene designation" value="Sostdc1"/>
</dbReference>
<dbReference type="eggNOG" id="ENOG502QV5G">
    <property type="taxonomic scope" value="Eukaryota"/>
</dbReference>
<dbReference type="GeneTree" id="ENSGT00390000014900"/>
<dbReference type="HOGENOM" id="CLU_087969_0_0_1"/>
<dbReference type="InParanoid" id="Q642G2"/>
<dbReference type="OMA" id="ACIFTKS"/>
<dbReference type="OrthoDB" id="6624188at2759"/>
<dbReference type="PhylomeDB" id="Q642G2"/>
<dbReference type="TreeFam" id="TF353019"/>
<dbReference type="PRO" id="PR:Q642G2"/>
<dbReference type="Proteomes" id="UP000002494">
    <property type="component" value="Chromosome 6"/>
</dbReference>
<dbReference type="Bgee" id="ENSRNOG00000005770">
    <property type="expression patterns" value="Expressed in kidney and 16 other cell types or tissues"/>
</dbReference>
<dbReference type="GO" id="GO:0005615">
    <property type="term" value="C:extracellular space"/>
    <property type="evidence" value="ECO:0000266"/>
    <property type="project" value="RGD"/>
</dbReference>
<dbReference type="GO" id="GO:0036122">
    <property type="term" value="F:BMP binding"/>
    <property type="evidence" value="ECO:0000266"/>
    <property type="project" value="RGD"/>
</dbReference>
<dbReference type="GO" id="GO:0098821">
    <property type="term" value="F:BMP receptor activity"/>
    <property type="evidence" value="ECO:0000266"/>
    <property type="project" value="RGD"/>
</dbReference>
<dbReference type="GO" id="GO:0030509">
    <property type="term" value="P:BMP signaling pathway"/>
    <property type="evidence" value="ECO:0000266"/>
    <property type="project" value="RGD"/>
</dbReference>
<dbReference type="GO" id="GO:0060070">
    <property type="term" value="P:canonical Wnt signaling pathway"/>
    <property type="evidence" value="ECO:0000266"/>
    <property type="project" value="RGD"/>
</dbReference>
<dbReference type="GO" id="GO:0045165">
    <property type="term" value="P:cell fate commitment"/>
    <property type="evidence" value="ECO:0000266"/>
    <property type="project" value="RGD"/>
</dbReference>
<dbReference type="GO" id="GO:0007566">
    <property type="term" value="P:embryo implantation"/>
    <property type="evidence" value="ECO:0000303"/>
    <property type="project" value="RGD"/>
</dbReference>
<dbReference type="GO" id="GO:0072148">
    <property type="term" value="P:epithelial cell fate commitment"/>
    <property type="evidence" value="ECO:0000266"/>
    <property type="project" value="RGD"/>
</dbReference>
<dbReference type="GO" id="GO:0031069">
    <property type="term" value="P:hair follicle morphogenesis"/>
    <property type="evidence" value="ECO:0000266"/>
    <property type="project" value="RGD"/>
</dbReference>
<dbReference type="GO" id="GO:0060648">
    <property type="term" value="P:mammary gland bud morphogenesis"/>
    <property type="evidence" value="ECO:0000266"/>
    <property type="project" value="RGD"/>
</dbReference>
<dbReference type="GO" id="GO:0030514">
    <property type="term" value="P:negative regulation of BMP signaling pathway"/>
    <property type="evidence" value="ECO:0000266"/>
    <property type="project" value="RGD"/>
</dbReference>
<dbReference type="GO" id="GO:0090090">
    <property type="term" value="P:negative regulation of canonical Wnt signaling pathway"/>
    <property type="evidence" value="ECO:0000266"/>
    <property type="project" value="RGD"/>
</dbReference>
<dbReference type="GO" id="GO:0010454">
    <property type="term" value="P:negative regulation of cell fate commitment"/>
    <property type="evidence" value="ECO:0000266"/>
    <property type="project" value="RGD"/>
</dbReference>
<dbReference type="GO" id="GO:2000016">
    <property type="term" value="P:negative regulation of determination of dorsal identity"/>
    <property type="evidence" value="ECO:0000266"/>
    <property type="project" value="RGD"/>
</dbReference>
<dbReference type="GO" id="GO:0045662">
    <property type="term" value="P:negative regulation of myoblast differentiation"/>
    <property type="evidence" value="ECO:0000266"/>
    <property type="project" value="RGD"/>
</dbReference>
<dbReference type="GO" id="GO:0030178">
    <property type="term" value="P:negative regulation of Wnt signaling pathway"/>
    <property type="evidence" value="ECO:0000266"/>
    <property type="project" value="RGD"/>
</dbReference>
<dbReference type="GO" id="GO:0042475">
    <property type="term" value="P:odontogenesis of dentin-containing tooth"/>
    <property type="evidence" value="ECO:0000266"/>
    <property type="project" value="RGD"/>
</dbReference>
<dbReference type="GO" id="GO:0007389">
    <property type="term" value="P:pattern specification process"/>
    <property type="evidence" value="ECO:0000266"/>
    <property type="project" value="RGD"/>
</dbReference>
<dbReference type="FunFam" id="2.10.90.10:FF:000019">
    <property type="entry name" value="Sclerostin domain-containing protein 1"/>
    <property type="match status" value="1"/>
</dbReference>
<dbReference type="Gene3D" id="2.10.90.10">
    <property type="entry name" value="Cystine-knot cytokines"/>
    <property type="match status" value="1"/>
</dbReference>
<dbReference type="InterPro" id="IPR006207">
    <property type="entry name" value="Cys_knot_C"/>
</dbReference>
<dbReference type="InterPro" id="IPR029034">
    <property type="entry name" value="Cystine-knot_cytokine"/>
</dbReference>
<dbReference type="InterPro" id="IPR008835">
    <property type="entry name" value="Sclerostin/SOSTDC1"/>
</dbReference>
<dbReference type="PANTHER" id="PTHR14903:SF5">
    <property type="entry name" value="SCLEROSTIN DOMAIN-CONTAINING PROTEIN 1"/>
    <property type="match status" value="1"/>
</dbReference>
<dbReference type="PANTHER" id="PTHR14903">
    <property type="entry name" value="SCLEROSTIN-RELATED"/>
    <property type="match status" value="1"/>
</dbReference>
<dbReference type="Pfam" id="PF05463">
    <property type="entry name" value="Sclerostin"/>
    <property type="match status" value="1"/>
</dbReference>
<dbReference type="PROSITE" id="PS01225">
    <property type="entry name" value="CTCK_2"/>
    <property type="match status" value="1"/>
</dbReference>
<organism>
    <name type="scientific">Rattus norvegicus</name>
    <name type="common">Rat</name>
    <dbReference type="NCBI Taxonomy" id="10116"/>
    <lineage>
        <taxon>Eukaryota</taxon>
        <taxon>Metazoa</taxon>
        <taxon>Chordata</taxon>
        <taxon>Craniata</taxon>
        <taxon>Vertebrata</taxon>
        <taxon>Euteleostomi</taxon>
        <taxon>Mammalia</taxon>
        <taxon>Eutheria</taxon>
        <taxon>Euarchontoglires</taxon>
        <taxon>Glires</taxon>
        <taxon>Rodentia</taxon>
        <taxon>Myomorpha</taxon>
        <taxon>Muroidea</taxon>
        <taxon>Muridae</taxon>
        <taxon>Murinae</taxon>
        <taxon>Rattus</taxon>
    </lineage>
</organism>
<gene>
    <name type="primary">Sostdc1</name>
    <name type="synonym">Usag1</name>
    <name type="synonym">Wise</name>
</gene>
<protein>
    <recommendedName>
        <fullName>Sclerostin domain-containing protein 1</fullName>
    </recommendedName>
    <alternativeName>
        <fullName>Uterine sensitization-associated gene 1 protein</fullName>
        <shortName>USAG-1</shortName>
    </alternativeName>
    <alternativeName>
        <fullName>Wnt-signaling modulator</fullName>
    </alternativeName>
</protein>
<keyword id="KW-1015">Disulfide bond</keyword>
<keyword id="KW-0325">Glycoprotein</keyword>
<keyword id="KW-1185">Reference proteome</keyword>
<keyword id="KW-0964">Secreted</keyword>
<keyword id="KW-0732">Signal</keyword>
<keyword id="KW-0879">Wnt signaling pathway</keyword>
<evidence type="ECO:0000250" key="1"/>
<evidence type="ECO:0000255" key="2"/>
<evidence type="ECO:0000255" key="3">
    <source>
        <dbReference type="PROSITE-ProRule" id="PRU00039"/>
    </source>
</evidence>
<evidence type="ECO:0000256" key="4">
    <source>
        <dbReference type="SAM" id="MobiDB-lite"/>
    </source>
</evidence>
<evidence type="ECO:0000269" key="5">
    <source>
    </source>
</evidence>
<evidence type="ECO:0000269" key="6">
    <source>
    </source>
</evidence>
<evidence type="ECO:0000305" key="7"/>
<sequence>MLPPAIHLSLIPLLCILMKNCLAFKNDATEILYSHVVKPVSAHPSSNSTLNQARNGGRHFSSTGLDRNSRVQVGCRELRSTKYISDGQCTSISPLKELVCAGECLPLPVLPNWIGGGYGTKYWSRRSSQEWRCVNDKTRTQRIQLQCQDGSTRTYKITVVTACKCKRYTRQHNESSHNFESVSPAKPAQHHRERKRASKSSKHSLS</sequence>
<accession>Q642G2</accession>
<accession>Q8CJA4</accession>